<feature type="chain" id="PRO_0000057063" description="Diphosphoinositol polyphosphate phosphohydrolase 3-alpha">
    <location>
        <begin position="1"/>
        <end position="164"/>
    </location>
</feature>
<feature type="domain" description="Nudix hydrolase" evidence="4">
    <location>
        <begin position="17"/>
        <end position="144"/>
    </location>
</feature>
<feature type="region of interest" description="Disordered" evidence="5">
    <location>
        <begin position="144"/>
        <end position="164"/>
    </location>
</feature>
<feature type="short sequence motif" description="Nudix box">
    <location>
        <begin position="50"/>
        <end position="71"/>
    </location>
</feature>
<feature type="active site" description="Proton acceptor" evidence="1">
    <location>
        <position position="68"/>
    </location>
</feature>
<feature type="binding site" evidence="2">
    <location>
        <position position="9"/>
    </location>
    <ligand>
        <name>substrate</name>
    </ligand>
</feature>
<feature type="binding site" evidence="2">
    <location>
        <begin position="17"/>
        <end position="19"/>
    </location>
    <ligand>
        <name>substrate</name>
    </ligand>
</feature>
<feature type="binding site" evidence="2">
    <location>
        <begin position="38"/>
        <end position="40"/>
    </location>
    <ligand>
        <name>substrate</name>
    </ligand>
</feature>
<feature type="binding site" evidence="2">
    <location>
        <position position="49"/>
    </location>
    <ligand>
        <name>Mg(2+)</name>
        <dbReference type="ChEBI" id="CHEBI:18420"/>
        <label>1</label>
    </ligand>
</feature>
<feature type="binding site" evidence="2">
    <location>
        <position position="65"/>
    </location>
    <ligand>
        <name>Mg(2+)</name>
        <dbReference type="ChEBI" id="CHEBI:18420"/>
        <label>2</label>
    </ligand>
</feature>
<feature type="binding site" evidence="2">
    <location>
        <position position="65"/>
    </location>
    <ligand>
        <name>Mg(2+)</name>
        <dbReference type="ChEBI" id="CHEBI:18420"/>
        <label>3</label>
    </ligand>
</feature>
<feature type="binding site" evidence="2">
    <location>
        <position position="69"/>
    </location>
    <ligand>
        <name>Mg(2+)</name>
        <dbReference type="ChEBI" id="CHEBI:18420"/>
        <label>1</label>
    </ligand>
</feature>
<feature type="binding site" evidence="2">
    <location>
        <begin position="89"/>
        <end position="91"/>
    </location>
    <ligand>
        <name>substrate</name>
    </ligand>
</feature>
<feature type="binding site" evidence="2">
    <location>
        <position position="115"/>
    </location>
    <ligand>
        <name>substrate</name>
    </ligand>
</feature>
<feature type="binding site" evidence="2">
    <location>
        <position position="133"/>
    </location>
    <ligand>
        <name>substrate</name>
    </ligand>
</feature>
<comment type="function">
    <text>Cleaves a beta-phosphate from the diphosphate groups in PP-InsP5 (diphosphoinositol pentakisphosphate), suggesting that it may play a role in signal transduction. Also able to catalyze the hydrolysis of dinucleoside oligophosphates, with Ap6A and Ap5A being the preferred substrates. The major reaction products are ADP and p4a from Ap6A and ADP and ATP from Ap5A. Also able to hydrolyze 5-phosphoribose 1-diphosphate; however, the relevance of such activity in vivo remains unclear.</text>
</comment>
<comment type="catalytic activity">
    <reaction evidence="6">
        <text>diphospho-myo-inositol polyphosphate + H2O = myo-inositol polyphosphate + phosphate.</text>
        <dbReference type="EC" id="3.6.1.52"/>
    </reaction>
</comment>
<comment type="catalytic activity">
    <reaction evidence="6">
        <text>P(1),P(6)-bis(5'-adenosyl) hexaphosphate + H2O = adenosine 5'-pentaphosphate + AMP + 2 H(+)</text>
        <dbReference type="Rhea" id="RHEA:32047"/>
        <dbReference type="ChEBI" id="CHEBI:15377"/>
        <dbReference type="ChEBI" id="CHEBI:15378"/>
        <dbReference type="ChEBI" id="CHEBI:63740"/>
        <dbReference type="ChEBI" id="CHEBI:63813"/>
        <dbReference type="ChEBI" id="CHEBI:456215"/>
        <dbReference type="EC" id="3.6.1.60"/>
    </reaction>
</comment>
<comment type="catalytic activity">
    <reaction evidence="6">
        <text>P(1),P(5)-bis(5'-adenosyl) pentaphosphate + H2O = adenosine 5'-tetraphosphate + AMP + 2 H(+)</text>
        <dbReference type="Rhea" id="RHEA:32051"/>
        <dbReference type="ChEBI" id="CHEBI:15377"/>
        <dbReference type="ChEBI" id="CHEBI:15378"/>
        <dbReference type="ChEBI" id="CHEBI:58450"/>
        <dbReference type="ChEBI" id="CHEBI:62041"/>
        <dbReference type="ChEBI" id="CHEBI:456215"/>
        <dbReference type="EC" id="3.6.1.60"/>
    </reaction>
</comment>
<comment type="cofactor">
    <cofactor evidence="3">
        <name>Mg(2+)</name>
        <dbReference type="ChEBI" id="CHEBI:18420"/>
    </cofactor>
    <cofactor evidence="3">
        <name>Mn(2+)</name>
        <dbReference type="ChEBI" id="CHEBI:29035"/>
    </cofactor>
    <text evidence="3">Binds 3 Mg(2+) or Mn(2+) ions per subunit. Mn(2+) may be the true cofactor in vivo.</text>
</comment>
<comment type="subcellular location">
    <subcellularLocation>
        <location evidence="3">Cytoplasm</location>
    </subcellularLocation>
</comment>
<comment type="tissue specificity">
    <text evidence="6">Mainly expressed in testis, liver kidney and, at lower level, in heart, brain, spleen, lung and skeletal muscle.</text>
</comment>
<comment type="miscellaneous">
    <text>Nudt10 and Nudt11 code for identical proteins, which gives their indidual characterization difficult. Thus, most experiments do not discriminate between the 2 proteins.</text>
</comment>
<comment type="similarity">
    <text evidence="7">Belongs to the Nudix hydrolase family. DIPP subfamily.</text>
</comment>
<gene>
    <name evidence="8" type="primary">Nudt10</name>
    <name type="synonym">Dipp3a</name>
</gene>
<name>NUD10_MOUSE</name>
<proteinExistence type="evidence at protein level"/>
<reference key="1">
    <citation type="journal article" date="2003" name="Biochem. J.">
        <title>Paralogous murine Nudt10 and Nudt11 genes have differential expression patterns but encode identical proteins that are physiologically competent diphosphoinositol polyphosphate phosphohydrolases.</title>
        <authorList>
            <person name="Hua L.V."/>
            <person name="Hidaka K."/>
            <person name="Pesesse X."/>
            <person name="Barnes L.D."/>
            <person name="Shears S.B."/>
        </authorList>
    </citation>
    <scope>NUCLEOTIDE SEQUENCE [MRNA]</scope>
    <scope>CATALYTIC ACTIVITY</scope>
    <scope>TISSUE SPECIFICITY</scope>
</reference>
<reference key="2">
    <citation type="journal article" date="2004" name="Genome Res.">
        <title>The status, quality, and expansion of the NIH full-length cDNA project: the Mammalian Gene Collection (MGC).</title>
        <authorList>
            <consortium name="The MGC Project Team"/>
        </authorList>
    </citation>
    <scope>NUCLEOTIDE SEQUENCE [LARGE SCALE MRNA]</scope>
    <source>
        <strain>C57BL/6J</strain>
        <tissue>Brain</tissue>
        <tissue>Embryo</tissue>
    </source>
</reference>
<reference key="3">
    <citation type="journal article" date="2004" name="Mol. Cell. Proteomics">
        <title>Phosphoproteomic analysis of the developing mouse brain.</title>
        <authorList>
            <person name="Ballif B.A."/>
            <person name="Villen J."/>
            <person name="Beausoleil S.A."/>
            <person name="Schwartz D."/>
            <person name="Gygi S.P."/>
        </authorList>
    </citation>
    <scope>IDENTIFICATION BY MASS SPECTROMETRY [LARGE SCALE ANALYSIS]</scope>
    <source>
        <tissue>Embryonic brain</tissue>
    </source>
</reference>
<reference key="4">
    <citation type="journal article" date="2010" name="Cell">
        <title>A tissue-specific atlas of mouse protein phosphorylation and expression.</title>
        <authorList>
            <person name="Huttlin E.L."/>
            <person name="Jedrychowski M.P."/>
            <person name="Elias J.E."/>
            <person name="Goswami T."/>
            <person name="Rad R."/>
            <person name="Beausoleil S.A."/>
            <person name="Villen J."/>
            <person name="Haas W."/>
            <person name="Sowa M.E."/>
            <person name="Gygi S.P."/>
        </authorList>
    </citation>
    <scope>IDENTIFICATION BY MASS SPECTROMETRY [LARGE SCALE ANALYSIS]</scope>
    <source>
        <tissue>Brain</tissue>
        <tissue>Testis</tissue>
    </source>
</reference>
<sequence length="164" mass="18593">MKCKPNQTRTYDPEGFKKRAACLCFRSEREDEVLLVSSSRYPDRWIVPGGGMEPEEEPDGAAVREVYEEAGVKGKLGRLLGVFEQNQDRKHRTYVFVLTVTELLEDWEDSVSIGRKREWFKIEDAIKVLQCHKPVHAEYLEKLKLGGSPTNGNSAAPSPPESEP</sequence>
<evidence type="ECO:0000250" key="1"/>
<evidence type="ECO:0000250" key="2">
    <source>
        <dbReference type="UniProtKB" id="O95989"/>
    </source>
</evidence>
<evidence type="ECO:0000250" key="3">
    <source>
        <dbReference type="UniProtKB" id="Q8NFP7"/>
    </source>
</evidence>
<evidence type="ECO:0000255" key="4">
    <source>
        <dbReference type="PROSITE-ProRule" id="PRU00794"/>
    </source>
</evidence>
<evidence type="ECO:0000256" key="5">
    <source>
        <dbReference type="SAM" id="MobiDB-lite"/>
    </source>
</evidence>
<evidence type="ECO:0000269" key="6">
    <source>
    </source>
</evidence>
<evidence type="ECO:0000305" key="7"/>
<evidence type="ECO:0000312" key="8">
    <source>
        <dbReference type="MGI" id="MGI:2147931"/>
    </source>
</evidence>
<dbReference type="EC" id="3.6.1.52" evidence="6"/>
<dbReference type="EC" id="3.6.1.60" evidence="6"/>
<dbReference type="EMBL" id="BC055771">
    <property type="protein sequence ID" value="AAH55771.1"/>
    <property type="molecule type" value="mRNA"/>
</dbReference>
<dbReference type="CCDS" id="CCDS29957.1"/>
<dbReference type="RefSeq" id="NP_001026834.1">
    <property type="nucleotide sequence ID" value="NM_001031664.2"/>
</dbReference>
<dbReference type="RefSeq" id="NP_001420391.1">
    <property type="nucleotide sequence ID" value="NM_001433462.1"/>
</dbReference>
<dbReference type="RefSeq" id="NP_067406.2">
    <property type="nucleotide sequence ID" value="NM_021431.2"/>
</dbReference>
<dbReference type="RefSeq" id="XP_006527609.1">
    <property type="nucleotide sequence ID" value="XM_006527546.2"/>
</dbReference>
<dbReference type="SMR" id="P0C027"/>
<dbReference type="BioGRID" id="208413">
    <property type="interactions" value="1"/>
</dbReference>
<dbReference type="FunCoup" id="P0C027">
    <property type="interactions" value="1605"/>
</dbReference>
<dbReference type="STRING" id="10090.ENSMUSP00000100071"/>
<dbReference type="GlyGen" id="P0C027">
    <property type="glycosylation" value="1 site, 1 N-linked glycan (1 site)"/>
</dbReference>
<dbReference type="iPTMnet" id="P0C027"/>
<dbReference type="PhosphoSitePlus" id="P0C027"/>
<dbReference type="SwissPalm" id="P0C027"/>
<dbReference type="jPOST" id="P0C027"/>
<dbReference type="PaxDb" id="10090-ENSMUSP00000100071"/>
<dbReference type="PeptideAtlas" id="P0C027"/>
<dbReference type="ProteomicsDB" id="252865"/>
<dbReference type="DNASU" id="102954"/>
<dbReference type="DNASU" id="58242"/>
<dbReference type="Ensembl" id="ENSMUST00000103006.4">
    <property type="protein sequence ID" value="ENSMUSP00000100071.4"/>
    <property type="gene ID" value="ENSMUSG00000073293.5"/>
</dbReference>
<dbReference type="Ensembl" id="ENSMUST00000103007.4">
    <property type="protein sequence ID" value="ENSMUSP00000100072.4"/>
    <property type="gene ID" value="ENSMUSG00000073295.5"/>
</dbReference>
<dbReference type="GeneID" id="102954"/>
<dbReference type="GeneID" id="58242"/>
<dbReference type="KEGG" id="mmu:102954"/>
<dbReference type="KEGG" id="mmu:58242"/>
<dbReference type="UCSC" id="uc009sku.1">
    <property type="organism name" value="mouse"/>
</dbReference>
<dbReference type="AGR" id="MGI:2147931"/>
<dbReference type="CTD" id="170685"/>
<dbReference type="CTD" id="55190"/>
<dbReference type="MGI" id="MGI:2147931">
    <property type="gene designation" value="Nudt10"/>
</dbReference>
<dbReference type="VEuPathDB" id="HostDB:ENSMUSG00000073293"/>
<dbReference type="VEuPathDB" id="HostDB:ENSMUSG00000073295"/>
<dbReference type="eggNOG" id="KOG2839">
    <property type="taxonomic scope" value="Eukaryota"/>
</dbReference>
<dbReference type="HOGENOM" id="CLU_037162_1_0_1"/>
<dbReference type="InParanoid" id="P0C027"/>
<dbReference type="OMA" id="KCEVESH"/>
<dbReference type="OrthoDB" id="2011998at2759"/>
<dbReference type="PhylomeDB" id="P0C027"/>
<dbReference type="Reactome" id="R-MMU-1855167">
    <property type="pathway name" value="Synthesis of pyrophosphates in the cytosol"/>
</dbReference>
<dbReference type="BioGRID-ORCS" id="102954">
    <property type="hits" value="2 hits in 45 CRISPR screens"/>
</dbReference>
<dbReference type="BioGRID-ORCS" id="58242">
    <property type="hits" value="6 hits in 46 CRISPR screens"/>
</dbReference>
<dbReference type="PRO" id="PR:P0C027"/>
<dbReference type="Proteomes" id="UP000000589">
    <property type="component" value="Chromosome X"/>
</dbReference>
<dbReference type="RNAct" id="P0C027">
    <property type="molecule type" value="protein"/>
</dbReference>
<dbReference type="Bgee" id="ENSMUSG00000073293">
    <property type="expression patterns" value="Expressed in cortical plate and 162 other cell types or tissues"/>
</dbReference>
<dbReference type="ExpressionAtlas" id="P0C027">
    <property type="expression patterns" value="baseline and differential"/>
</dbReference>
<dbReference type="GO" id="GO:0005737">
    <property type="term" value="C:cytoplasm"/>
    <property type="evidence" value="ECO:0007669"/>
    <property type="project" value="UniProtKB-SubCell"/>
</dbReference>
<dbReference type="GO" id="GO:0034431">
    <property type="term" value="F:bis(5'-adenosyl)-hexaphosphatase activity"/>
    <property type="evidence" value="ECO:0007669"/>
    <property type="project" value="RHEA"/>
</dbReference>
<dbReference type="GO" id="GO:0008486">
    <property type="term" value="F:diphosphoinositol-polyphosphate diphosphatase activity"/>
    <property type="evidence" value="ECO:0000314"/>
    <property type="project" value="MGI"/>
</dbReference>
<dbReference type="GO" id="GO:0046872">
    <property type="term" value="F:metal ion binding"/>
    <property type="evidence" value="ECO:0007669"/>
    <property type="project" value="UniProtKB-KW"/>
</dbReference>
<dbReference type="CDD" id="cd04666">
    <property type="entry name" value="NUDIX_DIPP2_like_Nudt4"/>
    <property type="match status" value="1"/>
</dbReference>
<dbReference type="FunFam" id="3.90.79.10:FF:000002">
    <property type="entry name" value="diphosphoinositol polyphosphate phosphohydrolase 1"/>
    <property type="match status" value="1"/>
</dbReference>
<dbReference type="Gene3D" id="3.90.79.10">
    <property type="entry name" value="Nucleoside Triphosphate Pyrophosphohydrolase"/>
    <property type="match status" value="1"/>
</dbReference>
<dbReference type="InterPro" id="IPR047198">
    <property type="entry name" value="DDP-like_NUDIX"/>
</dbReference>
<dbReference type="InterPro" id="IPR020476">
    <property type="entry name" value="Nudix_hydrolase"/>
</dbReference>
<dbReference type="InterPro" id="IPR015797">
    <property type="entry name" value="NUDIX_hydrolase-like_dom_sf"/>
</dbReference>
<dbReference type="InterPro" id="IPR020084">
    <property type="entry name" value="NUDIX_hydrolase_CS"/>
</dbReference>
<dbReference type="InterPro" id="IPR000086">
    <property type="entry name" value="NUDIX_hydrolase_dom"/>
</dbReference>
<dbReference type="PANTHER" id="PTHR12629">
    <property type="entry name" value="DIPHOSPHOINOSITOL POLYPHOSPHATE PHOSPHOHYDROLASE"/>
    <property type="match status" value="1"/>
</dbReference>
<dbReference type="PANTHER" id="PTHR12629:SF35">
    <property type="entry name" value="DIPHOSPHOINOSITOL POLYPHOSPHATE PHOSPHOHYDROLASE 3-BETA"/>
    <property type="match status" value="1"/>
</dbReference>
<dbReference type="Pfam" id="PF00293">
    <property type="entry name" value="NUDIX"/>
    <property type="match status" value="1"/>
</dbReference>
<dbReference type="PRINTS" id="PR00502">
    <property type="entry name" value="NUDIXFAMILY"/>
</dbReference>
<dbReference type="SUPFAM" id="SSF55811">
    <property type="entry name" value="Nudix"/>
    <property type="match status" value="1"/>
</dbReference>
<dbReference type="PROSITE" id="PS51462">
    <property type="entry name" value="NUDIX"/>
    <property type="match status" value="1"/>
</dbReference>
<dbReference type="PROSITE" id="PS00893">
    <property type="entry name" value="NUDIX_BOX"/>
    <property type="match status" value="1"/>
</dbReference>
<keyword id="KW-0963">Cytoplasm</keyword>
<keyword id="KW-0378">Hydrolase</keyword>
<keyword id="KW-0460">Magnesium</keyword>
<keyword id="KW-0464">Manganese</keyword>
<keyword id="KW-0479">Metal-binding</keyword>
<keyword id="KW-1185">Reference proteome</keyword>
<organism>
    <name type="scientific">Mus musculus</name>
    <name type="common">Mouse</name>
    <dbReference type="NCBI Taxonomy" id="10090"/>
    <lineage>
        <taxon>Eukaryota</taxon>
        <taxon>Metazoa</taxon>
        <taxon>Chordata</taxon>
        <taxon>Craniata</taxon>
        <taxon>Vertebrata</taxon>
        <taxon>Euteleostomi</taxon>
        <taxon>Mammalia</taxon>
        <taxon>Eutheria</taxon>
        <taxon>Euarchontoglires</taxon>
        <taxon>Glires</taxon>
        <taxon>Rodentia</taxon>
        <taxon>Myomorpha</taxon>
        <taxon>Muroidea</taxon>
        <taxon>Muridae</taxon>
        <taxon>Murinae</taxon>
        <taxon>Mus</taxon>
        <taxon>Mus</taxon>
    </lineage>
</organism>
<accession>P0C027</accession>
<accession>Q8BKF4</accession>
<protein>
    <recommendedName>
        <fullName evidence="3">Diphosphoinositol polyphosphate phosphohydrolase 3-alpha</fullName>
        <shortName>DIPP-3-alpha</shortName>
        <shortName>DIPP3-alpha</shortName>
        <ecNumber evidence="6">3.6.1.52</ecNumber>
    </recommendedName>
    <alternativeName>
        <fullName>Diadenosine 5',5'''-P1,P6-hexaphosphate hydrolase 3-alpha</fullName>
    </alternativeName>
    <alternativeName>
        <fullName>Diadenosine hexaphosphate hydrolase (AMP-forming)</fullName>
        <ecNumber evidence="6">3.6.1.60</ecNumber>
    </alternativeName>
    <alternativeName>
        <fullName>Nucleoside diphosphate-linked moiety X motif 10</fullName>
        <shortName>Nudix motif 10</shortName>
    </alternativeName>
</protein>